<name>YE07_SCHPO</name>
<dbReference type="EMBL" id="CU329670">
    <property type="protein sequence ID" value="CAB11216.1"/>
    <property type="molecule type" value="Genomic_DNA"/>
</dbReference>
<dbReference type="PIR" id="T37873">
    <property type="entry name" value="T37873"/>
</dbReference>
<dbReference type="RefSeq" id="NP_593577.1">
    <property type="nucleotide sequence ID" value="NM_001019009.2"/>
</dbReference>
<dbReference type="SMR" id="O13804"/>
<dbReference type="BioGRID" id="278910">
    <property type="interactions" value="1"/>
</dbReference>
<dbReference type="FunCoup" id="O13804">
    <property type="interactions" value="6"/>
</dbReference>
<dbReference type="STRING" id="284812.O13804"/>
<dbReference type="iPTMnet" id="O13804"/>
<dbReference type="PaxDb" id="4896-SPAC17H9.07.1"/>
<dbReference type="EnsemblFungi" id="SPAC17H9.07.1">
    <property type="protein sequence ID" value="SPAC17H9.07.1:pep"/>
    <property type="gene ID" value="SPAC17H9.07"/>
</dbReference>
<dbReference type="PomBase" id="SPAC17H9.07"/>
<dbReference type="VEuPathDB" id="FungiDB:SPAC17H9.07"/>
<dbReference type="eggNOG" id="KOG3465">
    <property type="taxonomic scope" value="Eukaryota"/>
</dbReference>
<dbReference type="HOGENOM" id="CLU_096859_1_0_1"/>
<dbReference type="InParanoid" id="O13804"/>
<dbReference type="OMA" id="ICIRFRT"/>
<dbReference type="Reactome" id="R-SPO-1799339">
    <property type="pathway name" value="SRP-dependent cotranslational protein targeting to membrane"/>
</dbReference>
<dbReference type="PRO" id="PR:O13804"/>
<dbReference type="Proteomes" id="UP000002485">
    <property type="component" value="Chromosome I"/>
</dbReference>
<dbReference type="GO" id="GO:0005829">
    <property type="term" value="C:cytosol"/>
    <property type="evidence" value="ECO:0007005"/>
    <property type="project" value="PomBase"/>
</dbReference>
<dbReference type="GO" id="GO:0005730">
    <property type="term" value="C:nucleolus"/>
    <property type="evidence" value="ECO:0007005"/>
    <property type="project" value="PomBase"/>
</dbReference>
<dbReference type="GO" id="GO:0005634">
    <property type="term" value="C:nucleus"/>
    <property type="evidence" value="ECO:0007005"/>
    <property type="project" value="PomBase"/>
</dbReference>
<dbReference type="GO" id="GO:0005786">
    <property type="term" value="C:signal recognition particle, endoplasmic reticulum targeting"/>
    <property type="evidence" value="ECO:0000318"/>
    <property type="project" value="GO_Central"/>
</dbReference>
<dbReference type="GO" id="GO:0008312">
    <property type="term" value="F:7S RNA binding"/>
    <property type="evidence" value="ECO:0007669"/>
    <property type="project" value="InterPro"/>
</dbReference>
<dbReference type="GO" id="GO:0006614">
    <property type="term" value="P:SRP-dependent cotranslational protein targeting to membrane"/>
    <property type="evidence" value="ECO:0000318"/>
    <property type="project" value="GO_Central"/>
</dbReference>
<dbReference type="FunFam" id="3.30.720.10:FF:000015">
    <property type="entry name" value="Uncharacterized protein C17H9.07"/>
    <property type="match status" value="1"/>
</dbReference>
<dbReference type="Gene3D" id="3.30.720.10">
    <property type="entry name" value="Signal recognition particle alu RNA binding heterodimer, srp9/1"/>
    <property type="match status" value="1"/>
</dbReference>
<dbReference type="InterPro" id="IPR009018">
    <property type="entry name" value="Signal_recog_particle_SRP9/14"/>
</dbReference>
<dbReference type="InterPro" id="IPR039914">
    <property type="entry name" value="SRP9-like"/>
</dbReference>
<dbReference type="InterPro" id="IPR039432">
    <property type="entry name" value="SRP9_dom"/>
</dbReference>
<dbReference type="PANTHER" id="PTHR12834">
    <property type="entry name" value="SIGNAL RECOGNITION PARTICLE 9 KDA PROTEIN"/>
    <property type="match status" value="1"/>
</dbReference>
<dbReference type="PANTHER" id="PTHR12834:SF12">
    <property type="entry name" value="SIGNAL RECOGNITION PARTICLE 9 KDA PROTEIN"/>
    <property type="match status" value="1"/>
</dbReference>
<dbReference type="Pfam" id="PF05486">
    <property type="entry name" value="SRP9-21"/>
    <property type="match status" value="1"/>
</dbReference>
<dbReference type="SUPFAM" id="SSF54762">
    <property type="entry name" value="Signal recognition particle alu RNA binding heterodimer, SRP9/14"/>
    <property type="match status" value="1"/>
</dbReference>
<keyword id="KW-1185">Reference proteome</keyword>
<protein>
    <recommendedName>
        <fullName>Uncharacterized protein C17H9.07</fullName>
    </recommendedName>
</protein>
<sequence>MVYLQTVNEFFTQSKSLTEAYPKTTKLSIKYRTNEQSQNYLIAKAFESASGICLKYRTDKAAELGRLLLIANKLSYVSTGNEIPPEPEQEVVASPVTEQKKAEPSAPPKGSKKKKRGKKK</sequence>
<reference key="1">
    <citation type="journal article" date="2002" name="Nature">
        <title>The genome sequence of Schizosaccharomyces pombe.</title>
        <authorList>
            <person name="Wood V."/>
            <person name="Gwilliam R."/>
            <person name="Rajandream M.A."/>
            <person name="Lyne M.H."/>
            <person name="Lyne R."/>
            <person name="Stewart A."/>
            <person name="Sgouros J.G."/>
            <person name="Peat N."/>
            <person name="Hayles J."/>
            <person name="Baker S.G."/>
            <person name="Basham D."/>
            <person name="Bowman S."/>
            <person name="Brooks K."/>
            <person name="Brown D."/>
            <person name="Brown S."/>
            <person name="Chillingworth T."/>
            <person name="Churcher C.M."/>
            <person name="Collins M."/>
            <person name="Connor R."/>
            <person name="Cronin A."/>
            <person name="Davis P."/>
            <person name="Feltwell T."/>
            <person name="Fraser A."/>
            <person name="Gentles S."/>
            <person name="Goble A."/>
            <person name="Hamlin N."/>
            <person name="Harris D.E."/>
            <person name="Hidalgo J."/>
            <person name="Hodgson G."/>
            <person name="Holroyd S."/>
            <person name="Hornsby T."/>
            <person name="Howarth S."/>
            <person name="Huckle E.J."/>
            <person name="Hunt S."/>
            <person name="Jagels K."/>
            <person name="James K.D."/>
            <person name="Jones L."/>
            <person name="Jones M."/>
            <person name="Leather S."/>
            <person name="McDonald S."/>
            <person name="McLean J."/>
            <person name="Mooney P."/>
            <person name="Moule S."/>
            <person name="Mungall K.L."/>
            <person name="Murphy L.D."/>
            <person name="Niblett D."/>
            <person name="Odell C."/>
            <person name="Oliver K."/>
            <person name="O'Neil S."/>
            <person name="Pearson D."/>
            <person name="Quail M.A."/>
            <person name="Rabbinowitsch E."/>
            <person name="Rutherford K.M."/>
            <person name="Rutter S."/>
            <person name="Saunders D."/>
            <person name="Seeger K."/>
            <person name="Sharp S."/>
            <person name="Skelton J."/>
            <person name="Simmonds M.N."/>
            <person name="Squares R."/>
            <person name="Squares S."/>
            <person name="Stevens K."/>
            <person name="Taylor K."/>
            <person name="Taylor R.G."/>
            <person name="Tivey A."/>
            <person name="Walsh S.V."/>
            <person name="Warren T."/>
            <person name="Whitehead S."/>
            <person name="Woodward J.R."/>
            <person name="Volckaert G."/>
            <person name="Aert R."/>
            <person name="Robben J."/>
            <person name="Grymonprez B."/>
            <person name="Weltjens I."/>
            <person name="Vanstreels E."/>
            <person name="Rieger M."/>
            <person name="Schaefer M."/>
            <person name="Mueller-Auer S."/>
            <person name="Gabel C."/>
            <person name="Fuchs M."/>
            <person name="Duesterhoeft A."/>
            <person name="Fritzc C."/>
            <person name="Holzer E."/>
            <person name="Moestl D."/>
            <person name="Hilbert H."/>
            <person name="Borzym K."/>
            <person name="Langer I."/>
            <person name="Beck A."/>
            <person name="Lehrach H."/>
            <person name="Reinhardt R."/>
            <person name="Pohl T.M."/>
            <person name="Eger P."/>
            <person name="Zimmermann W."/>
            <person name="Wedler H."/>
            <person name="Wambutt R."/>
            <person name="Purnelle B."/>
            <person name="Goffeau A."/>
            <person name="Cadieu E."/>
            <person name="Dreano S."/>
            <person name="Gloux S."/>
            <person name="Lelaure V."/>
            <person name="Mottier S."/>
            <person name="Galibert F."/>
            <person name="Aves S.J."/>
            <person name="Xiang Z."/>
            <person name="Hunt C."/>
            <person name="Moore K."/>
            <person name="Hurst S.M."/>
            <person name="Lucas M."/>
            <person name="Rochet M."/>
            <person name="Gaillardin C."/>
            <person name="Tallada V.A."/>
            <person name="Garzon A."/>
            <person name="Thode G."/>
            <person name="Daga R.R."/>
            <person name="Cruzado L."/>
            <person name="Jimenez J."/>
            <person name="Sanchez M."/>
            <person name="del Rey F."/>
            <person name="Benito J."/>
            <person name="Dominguez A."/>
            <person name="Revuelta J.L."/>
            <person name="Moreno S."/>
            <person name="Armstrong J."/>
            <person name="Forsburg S.L."/>
            <person name="Cerutti L."/>
            <person name="Lowe T."/>
            <person name="McCombie W.R."/>
            <person name="Paulsen I."/>
            <person name="Potashkin J."/>
            <person name="Shpakovski G.V."/>
            <person name="Ussery D."/>
            <person name="Barrell B.G."/>
            <person name="Nurse P."/>
        </authorList>
    </citation>
    <scope>NUCLEOTIDE SEQUENCE [LARGE SCALE GENOMIC DNA]</scope>
    <source>
        <strain>972 / ATCC 24843</strain>
    </source>
</reference>
<organism>
    <name type="scientific">Schizosaccharomyces pombe (strain 972 / ATCC 24843)</name>
    <name type="common">Fission yeast</name>
    <dbReference type="NCBI Taxonomy" id="284812"/>
    <lineage>
        <taxon>Eukaryota</taxon>
        <taxon>Fungi</taxon>
        <taxon>Dikarya</taxon>
        <taxon>Ascomycota</taxon>
        <taxon>Taphrinomycotina</taxon>
        <taxon>Schizosaccharomycetes</taxon>
        <taxon>Schizosaccharomycetales</taxon>
        <taxon>Schizosaccharomycetaceae</taxon>
        <taxon>Schizosaccharomyces</taxon>
    </lineage>
</organism>
<evidence type="ECO:0000256" key="1">
    <source>
        <dbReference type="SAM" id="MobiDB-lite"/>
    </source>
</evidence>
<accession>O13804</accession>
<proteinExistence type="predicted"/>
<feature type="chain" id="PRO_0000116690" description="Uncharacterized protein C17H9.07">
    <location>
        <begin position="1"/>
        <end position="120"/>
    </location>
</feature>
<feature type="region of interest" description="Disordered" evidence="1">
    <location>
        <begin position="79"/>
        <end position="120"/>
    </location>
</feature>
<feature type="compositionally biased region" description="Basic residues" evidence="1">
    <location>
        <begin position="110"/>
        <end position="120"/>
    </location>
</feature>
<gene>
    <name type="ORF">SPAC17H9.07</name>
</gene>